<sequence>MSTNRPAHAKKAEIVAEIVSKIQSAQGVAIAEYKHLTVEQMSNLRRQALKQGIEVKIYKDSLVRRAVEELNLTELNEYLTQQNVFVFSNDDAIGAAKLVANFAKENEALKLKAGVYEGAAMDTAAIMEVATLPSKEDLYSMFASSLLYPLRQVMAVINAVADTKQD</sequence>
<name>RL10_MESFL</name>
<organism>
    <name type="scientific">Mesoplasma florum (strain ATCC 33453 / NBRC 100688 / NCTC 11704 / L1)</name>
    <name type="common">Acholeplasma florum</name>
    <dbReference type="NCBI Taxonomy" id="265311"/>
    <lineage>
        <taxon>Bacteria</taxon>
        <taxon>Bacillati</taxon>
        <taxon>Mycoplasmatota</taxon>
        <taxon>Mollicutes</taxon>
        <taxon>Entomoplasmatales</taxon>
        <taxon>Entomoplasmataceae</taxon>
        <taxon>Mesoplasma</taxon>
    </lineage>
</organism>
<reference key="1">
    <citation type="submission" date="2004-06" db="EMBL/GenBank/DDBJ databases">
        <authorList>
            <person name="Birren B.W."/>
            <person name="Stange-Thomann N."/>
            <person name="Hafez N."/>
            <person name="DeCaprio D."/>
            <person name="Fisher S."/>
            <person name="Butler J."/>
            <person name="Elkins T."/>
            <person name="Kodira C.D."/>
            <person name="Major J."/>
            <person name="Wang S."/>
            <person name="Nicol R."/>
            <person name="Nusbaum C."/>
        </authorList>
    </citation>
    <scope>NUCLEOTIDE SEQUENCE [LARGE SCALE GENOMIC DNA]</scope>
    <source>
        <strain>ATCC 33453 / NBRC 100688 / NCTC 11704 / L1</strain>
    </source>
</reference>
<comment type="function">
    <text evidence="1">Forms part of the ribosomal stalk, playing a central role in the interaction of the ribosome with GTP-bound translation factors.</text>
</comment>
<comment type="subunit">
    <text evidence="1">Part of the ribosomal stalk of the 50S ribosomal subunit. The N-terminus interacts with L11 and the large rRNA to form the base of the stalk. The C-terminus forms an elongated spine to which L12 dimers bind in a sequential fashion forming a multimeric L10(L12)X complex.</text>
</comment>
<comment type="similarity">
    <text evidence="1">Belongs to the universal ribosomal protein uL10 family.</text>
</comment>
<dbReference type="EMBL" id="AE017263">
    <property type="protein sequence ID" value="AAT75960.1"/>
    <property type="molecule type" value="Genomic_DNA"/>
</dbReference>
<dbReference type="RefSeq" id="WP_011183500.1">
    <property type="nucleotide sequence ID" value="NC_006055.1"/>
</dbReference>
<dbReference type="RefSeq" id="YP_053844.1">
    <property type="nucleotide sequence ID" value="NC_006055.1"/>
</dbReference>
<dbReference type="SMR" id="Q6F0L3"/>
<dbReference type="STRING" id="265311.Mfl602"/>
<dbReference type="PaxDb" id="265311-Mfl602"/>
<dbReference type="EnsemblBacteria" id="AAT75960">
    <property type="protein sequence ID" value="AAT75960"/>
    <property type="gene ID" value="Mfl602"/>
</dbReference>
<dbReference type="GeneID" id="2897632"/>
<dbReference type="KEGG" id="mfl:Mfl602"/>
<dbReference type="PATRIC" id="fig|265311.5.peg.606"/>
<dbReference type="eggNOG" id="COG0244">
    <property type="taxonomic scope" value="Bacteria"/>
</dbReference>
<dbReference type="HOGENOM" id="CLU_092227_2_0_14"/>
<dbReference type="OrthoDB" id="9808307at2"/>
<dbReference type="Proteomes" id="UP000006647">
    <property type="component" value="Chromosome"/>
</dbReference>
<dbReference type="GO" id="GO:1990904">
    <property type="term" value="C:ribonucleoprotein complex"/>
    <property type="evidence" value="ECO:0007669"/>
    <property type="project" value="UniProtKB-KW"/>
</dbReference>
<dbReference type="GO" id="GO:0005840">
    <property type="term" value="C:ribosome"/>
    <property type="evidence" value="ECO:0007669"/>
    <property type="project" value="UniProtKB-KW"/>
</dbReference>
<dbReference type="GO" id="GO:0070180">
    <property type="term" value="F:large ribosomal subunit rRNA binding"/>
    <property type="evidence" value="ECO:0007669"/>
    <property type="project" value="UniProtKB-UniRule"/>
</dbReference>
<dbReference type="GO" id="GO:0006412">
    <property type="term" value="P:translation"/>
    <property type="evidence" value="ECO:0007669"/>
    <property type="project" value="UniProtKB-UniRule"/>
</dbReference>
<dbReference type="CDD" id="cd05797">
    <property type="entry name" value="Ribosomal_L10"/>
    <property type="match status" value="1"/>
</dbReference>
<dbReference type="Gene3D" id="3.30.70.1730">
    <property type="match status" value="1"/>
</dbReference>
<dbReference type="HAMAP" id="MF_00362">
    <property type="entry name" value="Ribosomal_uL10"/>
    <property type="match status" value="1"/>
</dbReference>
<dbReference type="InterPro" id="IPR001790">
    <property type="entry name" value="Ribosomal_uL10"/>
</dbReference>
<dbReference type="InterPro" id="IPR043141">
    <property type="entry name" value="Ribosomal_uL10-like_sf"/>
</dbReference>
<dbReference type="InterPro" id="IPR022973">
    <property type="entry name" value="Ribosomal_uL10_bac"/>
</dbReference>
<dbReference type="InterPro" id="IPR047865">
    <property type="entry name" value="Ribosomal_uL10_bac_type"/>
</dbReference>
<dbReference type="NCBIfam" id="NF000955">
    <property type="entry name" value="PRK00099.1-1"/>
    <property type="match status" value="1"/>
</dbReference>
<dbReference type="PANTHER" id="PTHR11560">
    <property type="entry name" value="39S RIBOSOMAL PROTEIN L10, MITOCHONDRIAL"/>
    <property type="match status" value="1"/>
</dbReference>
<dbReference type="Pfam" id="PF00466">
    <property type="entry name" value="Ribosomal_L10"/>
    <property type="match status" value="1"/>
</dbReference>
<dbReference type="SUPFAM" id="SSF160369">
    <property type="entry name" value="Ribosomal protein L10-like"/>
    <property type="match status" value="1"/>
</dbReference>
<gene>
    <name evidence="1" type="primary">rplJ</name>
    <name type="ordered locus">Mfl602</name>
</gene>
<evidence type="ECO:0000255" key="1">
    <source>
        <dbReference type="HAMAP-Rule" id="MF_00362"/>
    </source>
</evidence>
<evidence type="ECO:0000305" key="2"/>
<keyword id="KW-1185">Reference proteome</keyword>
<keyword id="KW-0687">Ribonucleoprotein</keyword>
<keyword id="KW-0689">Ribosomal protein</keyword>
<keyword id="KW-0694">RNA-binding</keyword>
<keyword id="KW-0699">rRNA-binding</keyword>
<feature type="chain" id="PRO_0000154661" description="Large ribosomal subunit protein uL10">
    <location>
        <begin position="1"/>
        <end position="166"/>
    </location>
</feature>
<proteinExistence type="inferred from homology"/>
<accession>Q6F0L3</accession>
<protein>
    <recommendedName>
        <fullName evidence="1">Large ribosomal subunit protein uL10</fullName>
    </recommendedName>
    <alternativeName>
        <fullName evidence="2">50S ribosomal protein L10</fullName>
    </alternativeName>
</protein>